<sequence length="339" mass="36985">MTARAFWLLCLIVGSSPEAPVAERKTSPPHSRKPDSRGCPSAEETPGPRAQPLLEAPQRPRAAEVAPAARAWPDPRRRKPPPPADNQASFREAARAPAGPPGPRLAQAENRASPRREPASEDAPRRARSRALRFPAARPPALATEGSAGHAHPNRPRAAALAPGPAPAPPPRFSLSFGLSPPQRDAEPGAEPCARACRSDLDEREAFCESEFAVNGIVHDVDVLGAGIRLVTLLVDRDGLYKMNRLYLTPDGFFFRVHMLALDSSSCNKPCPEFKPGSRYIVMGHIYHKRRQLPTALLQVLRGRLRPGDGLLRSSSSYVKRFNRKREGQIQGAIHTQCI</sequence>
<name>CQ058_HUMAN</name>
<comment type="alternative products">
    <event type="alternative splicing"/>
    <isoform>
        <id>Q2M2W7-1</id>
        <name>1</name>
        <sequence type="displayed"/>
    </isoform>
    <isoform>
        <id>Q2M2W7-2</id>
        <name>2</name>
        <sequence type="described" ref="VSP_036597"/>
    </isoform>
</comment>
<comment type="similarity">
    <text evidence="7">Belongs to the UPF0450 family.</text>
</comment>
<comment type="sequence caution" evidence="7">
    <conflict type="erroneous initiation">
        <sequence resource="EMBL-CDS" id="AAH36760"/>
    </conflict>
    <text>Truncated N-terminus.</text>
</comment>
<comment type="sequence caution" evidence="7">
    <conflict type="erroneous initiation">
        <sequence resource="EMBL-CDS" id="AAI05125"/>
    </conflict>
    <text>Truncated N-terminus.</text>
</comment>
<comment type="sequence caution" evidence="7">
    <conflict type="erroneous initiation">
        <sequence resource="EMBL-CDS" id="AAI12074"/>
    </conflict>
    <text>Truncated N-terminus.</text>
</comment>
<dbReference type="EMBL" id="AC134407">
    <property type="status" value="NOT_ANNOTATED_CDS"/>
    <property type="molecule type" value="Genomic_DNA"/>
</dbReference>
<dbReference type="EMBL" id="AK026583">
    <property type="status" value="NOT_ANNOTATED_CDS"/>
    <property type="molecule type" value="mRNA"/>
</dbReference>
<dbReference type="EMBL" id="AL556320">
    <property type="status" value="NOT_ANNOTATED_CDS"/>
    <property type="molecule type" value="mRNA"/>
</dbReference>
<dbReference type="EMBL" id="BC036760">
    <property type="protein sequence ID" value="AAH36760.1"/>
    <property type="status" value="ALT_INIT"/>
    <property type="molecule type" value="mRNA"/>
</dbReference>
<dbReference type="EMBL" id="BC105124">
    <property type="protein sequence ID" value="AAI05125.1"/>
    <property type="status" value="ALT_INIT"/>
    <property type="molecule type" value="mRNA"/>
</dbReference>
<dbReference type="EMBL" id="BC112073">
    <property type="protein sequence ID" value="AAI12074.1"/>
    <property type="status" value="ALT_INIT"/>
    <property type="molecule type" value="mRNA"/>
</dbReference>
<dbReference type="CCDS" id="CCDS92385.1">
    <molecule id="Q2M2W7-1"/>
</dbReference>
<dbReference type="RefSeq" id="NP_001369288.1">
    <molecule id="Q2M2W7-1"/>
    <property type="nucleotide sequence ID" value="NM_001382359.1"/>
</dbReference>
<dbReference type="RefSeq" id="NP_858041.2">
    <property type="nucleotide sequence ID" value="NM_181655.3"/>
</dbReference>
<dbReference type="FunCoup" id="Q2M2W7">
    <property type="interactions" value="19"/>
</dbReference>
<dbReference type="STRING" id="9606.ENSP00000402020"/>
<dbReference type="iPTMnet" id="Q2M2W7"/>
<dbReference type="PhosphoSitePlus" id="Q2M2W7"/>
<dbReference type="BioMuta" id="C17orf58"/>
<dbReference type="DMDM" id="215273993"/>
<dbReference type="MassIVE" id="Q2M2W7"/>
<dbReference type="PaxDb" id="9606-ENSP00000402020"/>
<dbReference type="PeptideAtlas" id="Q2M2W7"/>
<dbReference type="ProteomicsDB" id="61357">
    <molecule id="Q2M2W7-1"/>
</dbReference>
<dbReference type="ProteomicsDB" id="61358">
    <molecule id="Q2M2W7-2"/>
</dbReference>
<dbReference type="Antibodypedia" id="31734">
    <property type="antibodies" value="65 antibodies from 13 providers"/>
</dbReference>
<dbReference type="DNASU" id="284018"/>
<dbReference type="Ensembl" id="ENST00000580729.3">
    <molecule id="Q2M2W7-1"/>
    <property type="protein sequence ID" value="ENSP00000489720.1"/>
    <property type="gene ID" value="ENSG00000186665.10"/>
</dbReference>
<dbReference type="GeneID" id="284018"/>
<dbReference type="KEGG" id="hsa:284018"/>
<dbReference type="MANE-Select" id="ENST00000580729.3">
    <property type="protein sequence ID" value="ENSP00000489720.1"/>
    <property type="RefSeq nucleotide sequence ID" value="NM_001382359.1"/>
    <property type="RefSeq protein sequence ID" value="NP_001369288.1"/>
</dbReference>
<dbReference type="UCSC" id="uc002jgi.6">
    <molecule id="Q2M2W7-1"/>
    <property type="organism name" value="human"/>
</dbReference>
<dbReference type="AGR" id="HGNC:27568"/>
<dbReference type="CTD" id="284018"/>
<dbReference type="DisGeNET" id="284018"/>
<dbReference type="GeneCards" id="C17orf58"/>
<dbReference type="HGNC" id="HGNC:27568">
    <property type="gene designation" value="C17orf58"/>
</dbReference>
<dbReference type="HPA" id="ENSG00000186665">
    <property type="expression patterns" value="Tissue enhanced (placenta)"/>
</dbReference>
<dbReference type="neXtProt" id="NX_Q2M2W7"/>
<dbReference type="OpenTargets" id="ENSG00000186665"/>
<dbReference type="PharmGKB" id="PA142672241"/>
<dbReference type="VEuPathDB" id="HostDB:ENSG00000186665"/>
<dbReference type="eggNOG" id="ENOG502RZCW">
    <property type="taxonomic scope" value="Eukaryota"/>
</dbReference>
<dbReference type="GeneTree" id="ENSGT00390000002361"/>
<dbReference type="HOGENOM" id="CLU_183146_0_0_1"/>
<dbReference type="InParanoid" id="Q2M2W7"/>
<dbReference type="OrthoDB" id="9388635at2759"/>
<dbReference type="PAN-GO" id="Q2M2W7">
    <property type="GO annotations" value="0 GO annotations based on evolutionary models"/>
</dbReference>
<dbReference type="PhylomeDB" id="Q2M2W7"/>
<dbReference type="TreeFam" id="TF341123"/>
<dbReference type="PathwayCommons" id="Q2M2W7"/>
<dbReference type="BioGRID-ORCS" id="284018">
    <property type="hits" value="97 hits in 1117 CRISPR screens"/>
</dbReference>
<dbReference type="GenomeRNAi" id="284018"/>
<dbReference type="Pharos" id="Q2M2W7">
    <property type="development level" value="Tdark"/>
</dbReference>
<dbReference type="PRO" id="PR:Q2M2W7"/>
<dbReference type="Proteomes" id="UP000005640">
    <property type="component" value="Chromosome 17"/>
</dbReference>
<dbReference type="RNAct" id="Q2M2W7">
    <property type="molecule type" value="protein"/>
</dbReference>
<dbReference type="Bgee" id="ENSG00000186665">
    <property type="expression patterns" value="Expressed in synovial joint and 195 other cell types or tissues"/>
</dbReference>
<dbReference type="ExpressionAtlas" id="Q2M2W7">
    <property type="expression patterns" value="baseline and differential"/>
</dbReference>
<dbReference type="GO" id="GO:0062023">
    <property type="term" value="C:collagen-containing extracellular matrix"/>
    <property type="evidence" value="ECO:0007005"/>
    <property type="project" value="BHF-UCL"/>
</dbReference>
<dbReference type="FunFam" id="2.40.50.120:FF:000017">
    <property type="entry name" value="UPF0450 protein C17orf58 homolog"/>
    <property type="match status" value="1"/>
</dbReference>
<dbReference type="Gene3D" id="2.40.50.120">
    <property type="match status" value="1"/>
</dbReference>
<dbReference type="InterPro" id="IPR001134">
    <property type="entry name" value="Netrin_domain"/>
</dbReference>
<dbReference type="InterPro" id="IPR008993">
    <property type="entry name" value="TIMP-like_OB-fold"/>
</dbReference>
<dbReference type="PANTHER" id="PTHR35967">
    <property type="entry name" value="UPF0450 PROTEIN C17ORF58"/>
    <property type="match status" value="1"/>
</dbReference>
<dbReference type="PANTHER" id="PTHR35967:SF1">
    <property type="entry name" value="UPF0450 PROTEIN C17ORF58"/>
    <property type="match status" value="1"/>
</dbReference>
<dbReference type="SUPFAM" id="SSF50242">
    <property type="entry name" value="TIMP-like"/>
    <property type="match status" value="1"/>
</dbReference>
<dbReference type="PROSITE" id="PS50189">
    <property type="entry name" value="NTR"/>
    <property type="match status" value="1"/>
</dbReference>
<accession>Q2M2W7</accession>
<accession>A0A1B0GTI9</accession>
<accession>A8MQV2</accession>
<evidence type="ECO:0000255" key="1"/>
<evidence type="ECO:0000255" key="2">
    <source>
        <dbReference type="PROSITE-ProRule" id="PRU00295"/>
    </source>
</evidence>
<evidence type="ECO:0000256" key="3">
    <source>
        <dbReference type="SAM" id="MobiDB-lite"/>
    </source>
</evidence>
<evidence type="ECO:0000269" key="4">
    <source>
    </source>
</evidence>
<evidence type="ECO:0000303" key="5">
    <source>
    </source>
</evidence>
<evidence type="ECO:0000303" key="6">
    <source ref="3"/>
</evidence>
<evidence type="ECO:0000305" key="7"/>
<organism>
    <name type="scientific">Homo sapiens</name>
    <name type="common">Human</name>
    <dbReference type="NCBI Taxonomy" id="9606"/>
    <lineage>
        <taxon>Eukaryota</taxon>
        <taxon>Metazoa</taxon>
        <taxon>Chordata</taxon>
        <taxon>Craniata</taxon>
        <taxon>Vertebrata</taxon>
        <taxon>Euteleostomi</taxon>
        <taxon>Mammalia</taxon>
        <taxon>Eutheria</taxon>
        <taxon>Euarchontoglires</taxon>
        <taxon>Primates</taxon>
        <taxon>Haplorrhini</taxon>
        <taxon>Catarrhini</taxon>
        <taxon>Hominidae</taxon>
        <taxon>Homo</taxon>
    </lineage>
</organism>
<keyword id="KW-0025">Alternative splicing</keyword>
<keyword id="KW-1015">Disulfide bond</keyword>
<keyword id="KW-1267">Proteomics identification</keyword>
<keyword id="KW-1185">Reference proteome</keyword>
<keyword id="KW-0732">Signal</keyword>
<reference key="1">
    <citation type="journal article" date="2006" name="Nature">
        <title>DNA sequence of human chromosome 17 and analysis of rearrangement in the human lineage.</title>
        <authorList>
            <person name="Zody M.C."/>
            <person name="Garber M."/>
            <person name="Adams D.J."/>
            <person name="Sharpe T."/>
            <person name="Harrow J."/>
            <person name="Lupski J.R."/>
            <person name="Nicholson C."/>
            <person name="Searle S.M."/>
            <person name="Wilming L."/>
            <person name="Young S.K."/>
            <person name="Abouelleil A."/>
            <person name="Allen N.R."/>
            <person name="Bi W."/>
            <person name="Bloom T."/>
            <person name="Borowsky M.L."/>
            <person name="Bugalter B.E."/>
            <person name="Butler J."/>
            <person name="Chang J.L."/>
            <person name="Chen C.-K."/>
            <person name="Cook A."/>
            <person name="Corum B."/>
            <person name="Cuomo C.A."/>
            <person name="de Jong P.J."/>
            <person name="DeCaprio D."/>
            <person name="Dewar K."/>
            <person name="FitzGerald M."/>
            <person name="Gilbert J."/>
            <person name="Gibson R."/>
            <person name="Gnerre S."/>
            <person name="Goldstein S."/>
            <person name="Grafham D.V."/>
            <person name="Grocock R."/>
            <person name="Hafez N."/>
            <person name="Hagopian D.S."/>
            <person name="Hart E."/>
            <person name="Norman C.H."/>
            <person name="Humphray S."/>
            <person name="Jaffe D.B."/>
            <person name="Jones M."/>
            <person name="Kamal M."/>
            <person name="Khodiyar V.K."/>
            <person name="LaButti K."/>
            <person name="Laird G."/>
            <person name="Lehoczky J."/>
            <person name="Liu X."/>
            <person name="Lokyitsang T."/>
            <person name="Loveland J."/>
            <person name="Lui A."/>
            <person name="Macdonald P."/>
            <person name="Major J.E."/>
            <person name="Matthews L."/>
            <person name="Mauceli E."/>
            <person name="McCarroll S.A."/>
            <person name="Mihalev A.H."/>
            <person name="Mudge J."/>
            <person name="Nguyen C."/>
            <person name="Nicol R."/>
            <person name="O'Leary S.B."/>
            <person name="Osoegawa K."/>
            <person name="Schwartz D.C."/>
            <person name="Shaw-Smith C."/>
            <person name="Stankiewicz P."/>
            <person name="Steward C."/>
            <person name="Swarbreck D."/>
            <person name="Venkataraman V."/>
            <person name="Whittaker C.A."/>
            <person name="Yang X."/>
            <person name="Zimmer A.R."/>
            <person name="Bradley A."/>
            <person name="Hubbard T."/>
            <person name="Birren B.W."/>
            <person name="Rogers J."/>
            <person name="Lander E.S."/>
            <person name="Nusbaum C."/>
        </authorList>
    </citation>
    <scope>NUCLEOTIDE SEQUENCE [LARGE SCALE GENOMIC DNA]</scope>
</reference>
<reference key="2">
    <citation type="journal article" date="2004" name="Nat. Genet.">
        <title>Complete sequencing and characterization of 21,243 full-length human cDNAs.</title>
        <authorList>
            <person name="Ota T."/>
            <person name="Suzuki Y."/>
            <person name="Nishikawa T."/>
            <person name="Otsuki T."/>
            <person name="Sugiyama T."/>
            <person name="Irie R."/>
            <person name="Wakamatsu A."/>
            <person name="Hayashi K."/>
            <person name="Sato H."/>
            <person name="Nagai K."/>
            <person name="Kimura K."/>
            <person name="Makita H."/>
            <person name="Sekine M."/>
            <person name="Obayashi M."/>
            <person name="Nishi T."/>
            <person name="Shibahara T."/>
            <person name="Tanaka T."/>
            <person name="Ishii S."/>
            <person name="Yamamoto J."/>
            <person name="Saito K."/>
            <person name="Kawai Y."/>
            <person name="Isono Y."/>
            <person name="Nakamura Y."/>
            <person name="Nagahari K."/>
            <person name="Murakami K."/>
            <person name="Yasuda T."/>
            <person name="Iwayanagi T."/>
            <person name="Wagatsuma M."/>
            <person name="Shiratori A."/>
            <person name="Sudo H."/>
            <person name="Hosoiri T."/>
            <person name="Kaku Y."/>
            <person name="Kodaira H."/>
            <person name="Kondo H."/>
            <person name="Sugawara M."/>
            <person name="Takahashi M."/>
            <person name="Kanda K."/>
            <person name="Yokoi T."/>
            <person name="Furuya T."/>
            <person name="Kikkawa E."/>
            <person name="Omura Y."/>
            <person name="Abe K."/>
            <person name="Kamihara K."/>
            <person name="Katsuta N."/>
            <person name="Sato K."/>
            <person name="Tanikawa M."/>
            <person name="Yamazaki M."/>
            <person name="Ninomiya K."/>
            <person name="Ishibashi T."/>
            <person name="Yamashita H."/>
            <person name="Murakawa K."/>
            <person name="Fujimori K."/>
            <person name="Tanai H."/>
            <person name="Kimata M."/>
            <person name="Watanabe M."/>
            <person name="Hiraoka S."/>
            <person name="Chiba Y."/>
            <person name="Ishida S."/>
            <person name="Ono Y."/>
            <person name="Takiguchi S."/>
            <person name="Watanabe S."/>
            <person name="Yosida M."/>
            <person name="Hotuta T."/>
            <person name="Kusano J."/>
            <person name="Kanehori K."/>
            <person name="Takahashi-Fujii A."/>
            <person name="Hara H."/>
            <person name="Tanase T.-O."/>
            <person name="Nomura Y."/>
            <person name="Togiya S."/>
            <person name="Komai F."/>
            <person name="Hara R."/>
            <person name="Takeuchi K."/>
            <person name="Arita M."/>
            <person name="Imose N."/>
            <person name="Musashino K."/>
            <person name="Yuuki H."/>
            <person name="Oshima A."/>
            <person name="Sasaki N."/>
            <person name="Aotsuka S."/>
            <person name="Yoshikawa Y."/>
            <person name="Matsunawa H."/>
            <person name="Ichihara T."/>
            <person name="Shiohata N."/>
            <person name="Sano S."/>
            <person name="Moriya S."/>
            <person name="Momiyama H."/>
            <person name="Satoh N."/>
            <person name="Takami S."/>
            <person name="Terashima Y."/>
            <person name="Suzuki O."/>
            <person name="Nakagawa S."/>
            <person name="Senoh A."/>
            <person name="Mizoguchi H."/>
            <person name="Goto Y."/>
            <person name="Shimizu F."/>
            <person name="Wakebe H."/>
            <person name="Hishigaki H."/>
            <person name="Watanabe T."/>
            <person name="Sugiyama A."/>
            <person name="Takemoto M."/>
            <person name="Kawakami B."/>
            <person name="Yamazaki M."/>
            <person name="Watanabe K."/>
            <person name="Kumagai A."/>
            <person name="Itakura S."/>
            <person name="Fukuzumi Y."/>
            <person name="Fujimori Y."/>
            <person name="Komiyama M."/>
            <person name="Tashiro H."/>
            <person name="Tanigami A."/>
            <person name="Fujiwara T."/>
            <person name="Ono T."/>
            <person name="Yamada K."/>
            <person name="Fujii Y."/>
            <person name="Ozaki K."/>
            <person name="Hirao M."/>
            <person name="Ohmori Y."/>
            <person name="Kawabata A."/>
            <person name="Hikiji T."/>
            <person name="Kobatake N."/>
            <person name="Inagaki H."/>
            <person name="Ikema Y."/>
            <person name="Okamoto S."/>
            <person name="Okitani R."/>
            <person name="Kawakami T."/>
            <person name="Noguchi S."/>
            <person name="Itoh T."/>
            <person name="Shigeta K."/>
            <person name="Senba T."/>
            <person name="Matsumura K."/>
            <person name="Nakajima Y."/>
            <person name="Mizuno T."/>
            <person name="Morinaga M."/>
            <person name="Sasaki M."/>
            <person name="Togashi T."/>
            <person name="Oyama M."/>
            <person name="Hata H."/>
            <person name="Watanabe M."/>
            <person name="Komatsu T."/>
            <person name="Mizushima-Sugano J."/>
            <person name="Satoh T."/>
            <person name="Shirai Y."/>
            <person name="Takahashi Y."/>
            <person name="Nakagawa K."/>
            <person name="Okumura K."/>
            <person name="Nagase T."/>
            <person name="Nomura N."/>
            <person name="Kikuchi H."/>
            <person name="Masuho Y."/>
            <person name="Yamashita R."/>
            <person name="Nakai K."/>
            <person name="Yada T."/>
            <person name="Nakamura Y."/>
            <person name="Ohara O."/>
            <person name="Isogai T."/>
            <person name="Sugano S."/>
        </authorList>
    </citation>
    <scope>NUCLEOTIDE SEQUENCE [LARGE SCALE MRNA] OF 158-339 (ISOFORM 2)</scope>
</reference>
<reference key="3">
    <citation type="submission" date="2003-04" db="EMBL/GenBank/DDBJ databases">
        <title>Full-length cDNA libraries and normalization.</title>
        <authorList>
            <person name="Li W.B."/>
            <person name="Gruber C."/>
            <person name="Jessee J."/>
            <person name="Polayes D."/>
        </authorList>
    </citation>
    <scope>NUCLEOTIDE SEQUENCE [LARGE SCALE MRNA] OF 171-339 (ISOFORM 2)</scope>
</reference>
<reference key="4">
    <citation type="journal article" date="2004" name="Genome Res.">
        <title>The status, quality, and expansion of the NIH full-length cDNA project: the Mammalian Gene Collection (MGC).</title>
        <authorList>
            <consortium name="The MGC Project Team"/>
        </authorList>
    </citation>
    <scope>NUCLEOTIDE SEQUENCE [LARGE SCALE MRNA] OF 180-339 (ISOFORM 1)</scope>
    <scope>VARIANT VAL-334</scope>
    <source>
        <tissue>Brain</tissue>
        <tissue>Ovary</tissue>
    </source>
</reference>
<proteinExistence type="evidence at protein level"/>
<gene>
    <name type="primary">C17orf58</name>
</gene>
<protein>
    <recommendedName>
        <fullName>UPF0450 protein C17orf58</fullName>
    </recommendedName>
</protein>
<feature type="signal peptide" evidence="1">
    <location>
        <begin position="1"/>
        <end position="17"/>
    </location>
</feature>
<feature type="chain" id="PRO_0000279445" description="UPF0450 protein C17orf58">
    <location>
        <begin position="18"/>
        <end position="339"/>
    </location>
</feature>
<feature type="domain" description="NTR" evidence="2">
    <location>
        <begin position="193"/>
        <end position="338"/>
    </location>
</feature>
<feature type="region of interest" description="Disordered" evidence="3">
    <location>
        <begin position="17"/>
        <end position="191"/>
    </location>
</feature>
<feature type="compositionally biased region" description="Basic and acidic residues" evidence="3">
    <location>
        <begin position="21"/>
        <end position="36"/>
    </location>
</feature>
<feature type="compositionally biased region" description="Low complexity" evidence="3">
    <location>
        <begin position="56"/>
        <end position="72"/>
    </location>
</feature>
<feature type="compositionally biased region" description="Basic and acidic residues" evidence="3">
    <location>
        <begin position="112"/>
        <end position="125"/>
    </location>
</feature>
<feature type="compositionally biased region" description="Low complexity" evidence="3">
    <location>
        <begin position="132"/>
        <end position="163"/>
    </location>
</feature>
<feature type="disulfide bond" evidence="2">
    <location>
        <begin position="193"/>
        <end position="267"/>
    </location>
</feature>
<feature type="disulfide bond" evidence="2">
    <location>
        <begin position="197"/>
        <end position="271"/>
    </location>
</feature>
<feature type="disulfide bond" evidence="2">
    <location>
        <begin position="208"/>
        <end position="338"/>
    </location>
</feature>
<feature type="splice variant" id="VSP_036597" description="In isoform 2." evidence="5 6">
    <original>SRYIVMGHIYHKRRQLPTALLQVLRGRLRPGDGLLRSSSSYVKRFNRKREGQIQGAIHTQCI</original>
    <variation>IETDLNDAAYVLYTTVCNVGATARAVGRPAFFWERWGTMT</variation>
    <location>
        <begin position="278"/>
        <end position="339"/>
    </location>
</feature>
<feature type="sequence variant" id="VAR_030902" description="In dbSNP:rs9891146." evidence="4">
    <original>I</original>
    <variation>V</variation>
    <location>
        <position position="334"/>
    </location>
</feature>